<gene>
    <name type="primary">nudK</name>
    <name type="ordered locus">SCH_2473</name>
</gene>
<comment type="function">
    <text evidence="1">Nucleoside diphosphate sugar hydrolase that hydrolyzes GDP-mannose as its preferred substrate, yielding GMP and mannose-1-phosphate.</text>
</comment>
<comment type="catalytic activity">
    <reaction evidence="1">
        <text>GDP-alpha-D-mannose + H2O = alpha-D-mannose 1-phosphate + GMP + 2 H(+)</text>
        <dbReference type="Rhea" id="RHEA:27978"/>
        <dbReference type="ChEBI" id="CHEBI:15377"/>
        <dbReference type="ChEBI" id="CHEBI:15378"/>
        <dbReference type="ChEBI" id="CHEBI:57527"/>
        <dbReference type="ChEBI" id="CHEBI:58115"/>
        <dbReference type="ChEBI" id="CHEBI:58409"/>
    </reaction>
</comment>
<comment type="cofactor">
    <cofactor evidence="1">
        <name>Mg(2+)</name>
        <dbReference type="ChEBI" id="CHEBI:18420"/>
    </cofactor>
</comment>
<comment type="subunit">
    <text evidence="1">Homodimer.</text>
</comment>
<comment type="domain">
    <text evidence="1">In the dimer, the N-terminal domains are swapped between the two monomers, such that residues of both chains contribute to the active site.</text>
</comment>
<comment type="similarity">
    <text evidence="3">Belongs to the Nudix hydrolase family. NudK subfamily.</text>
</comment>
<reference key="1">
    <citation type="journal article" date="2005" name="Nucleic Acids Res.">
        <title>The genome sequence of Salmonella enterica serovar Choleraesuis, a highly invasive and resistant zoonotic pathogen.</title>
        <authorList>
            <person name="Chiu C.-H."/>
            <person name="Tang P."/>
            <person name="Chu C."/>
            <person name="Hu S."/>
            <person name="Bao Q."/>
            <person name="Yu J."/>
            <person name="Chou Y.-Y."/>
            <person name="Wang H.-S."/>
            <person name="Lee Y.-S."/>
        </authorList>
    </citation>
    <scope>NUCLEOTIDE SEQUENCE [LARGE SCALE GENOMIC DNA]</scope>
    <source>
        <strain>SC-B67</strain>
    </source>
</reference>
<organism>
    <name type="scientific">Salmonella choleraesuis (strain SC-B67)</name>
    <dbReference type="NCBI Taxonomy" id="321314"/>
    <lineage>
        <taxon>Bacteria</taxon>
        <taxon>Pseudomonadati</taxon>
        <taxon>Pseudomonadota</taxon>
        <taxon>Gammaproteobacteria</taxon>
        <taxon>Enterobacterales</taxon>
        <taxon>Enterobacteriaceae</taxon>
        <taxon>Salmonella</taxon>
    </lineage>
</organism>
<proteinExistence type="inferred from homology"/>
<protein>
    <recommendedName>
        <fullName>GDP-mannose pyrophosphatase</fullName>
        <ecNumber evidence="1">3.6.1.-</ecNumber>
    </recommendedName>
    <alternativeName>
        <fullName>GDP-mannose hydrolase</fullName>
    </alternativeName>
    <alternativeName>
        <fullName>GDPMK</fullName>
    </alternativeName>
</protein>
<evidence type="ECO:0000250" key="1">
    <source>
        <dbReference type="UniProtKB" id="P37128"/>
    </source>
</evidence>
<evidence type="ECO:0000255" key="2">
    <source>
        <dbReference type="PROSITE-ProRule" id="PRU00794"/>
    </source>
</evidence>
<evidence type="ECO:0000305" key="3"/>
<name>NUDK_SALCH</name>
<sequence length="191" mass="21824">MSQTITLIKDKILSDNYFTLRNITYDLTRRNGEVIRHKREVYDRGNGATILLYNSTKKTVLLVRQFRVATWVNGNQDGMLIETCAGLLDNDEPEVCIRKEAIEETGYDVGEVRKIFELYMSPGGVTELIHFFIAEYHDSERASIGGGVEDEEIEVLELPFSRALEMVRSGEIRDGKTVLLLNYLQTSHLMD</sequence>
<feature type="chain" id="PRO_0000342494" description="GDP-mannose pyrophosphatase">
    <location>
        <begin position="1"/>
        <end position="191"/>
    </location>
</feature>
<feature type="domain" description="Nudix hydrolase" evidence="2">
    <location>
        <begin position="43"/>
        <end position="180"/>
    </location>
</feature>
<feature type="short sequence motif" description="Nudix box">
    <location>
        <begin position="86"/>
        <end position="106"/>
    </location>
</feature>
<feature type="binding site" description="in other chain" evidence="1">
    <location>
        <position position="17"/>
    </location>
    <ligand>
        <name>GDP-alpha-D-mannose</name>
        <dbReference type="ChEBI" id="CHEBI:57527"/>
        <note>ligand shared between dimeric partners</note>
    </ligand>
</feature>
<feature type="binding site" evidence="1">
    <location>
        <begin position="38"/>
        <end position="40"/>
    </location>
    <ligand>
        <name>GDP-alpha-D-mannose</name>
        <dbReference type="ChEBI" id="CHEBI:57527"/>
        <note>ligand shared between dimeric partners</note>
    </ligand>
</feature>
<feature type="binding site" description="in other chain" evidence="1">
    <location>
        <position position="67"/>
    </location>
    <ligand>
        <name>GDP-alpha-D-mannose</name>
        <dbReference type="ChEBI" id="CHEBI:57527"/>
        <note>ligand shared between dimeric partners</note>
    </ligand>
</feature>
<feature type="binding site" description="in other chain" evidence="1">
    <location>
        <begin position="85"/>
        <end position="87"/>
    </location>
    <ligand>
        <name>GDP-alpha-D-mannose</name>
        <dbReference type="ChEBI" id="CHEBI:57527"/>
        <note>ligand shared between dimeric partners</note>
    </ligand>
</feature>
<feature type="binding site" evidence="1">
    <location>
        <position position="85"/>
    </location>
    <ligand>
        <name>Mg(2+)</name>
        <dbReference type="ChEBI" id="CHEBI:18420"/>
        <label>1</label>
    </ligand>
</feature>
<feature type="binding site" evidence="1">
    <location>
        <position position="100"/>
    </location>
    <ligand>
        <name>Mg(2+)</name>
        <dbReference type="ChEBI" id="CHEBI:18420"/>
        <label>2</label>
    </ligand>
</feature>
<feature type="binding site" description="in other chain" evidence="1">
    <location>
        <position position="104"/>
    </location>
    <ligand>
        <name>GDP-alpha-D-mannose</name>
        <dbReference type="ChEBI" id="CHEBI:57527"/>
        <note>ligand shared between dimeric partners</note>
    </ligand>
</feature>
<feature type="binding site" evidence="1">
    <location>
        <position position="104"/>
    </location>
    <ligand>
        <name>Mg(2+)</name>
        <dbReference type="ChEBI" id="CHEBI:18420"/>
        <label>1</label>
    </ligand>
</feature>
<feature type="binding site" evidence="1">
    <location>
        <position position="104"/>
    </location>
    <ligand>
        <name>Mg(2+)</name>
        <dbReference type="ChEBI" id="CHEBI:18420"/>
        <label>2</label>
    </ligand>
</feature>
<feature type="binding site" description="in other chain" evidence="1">
    <location>
        <position position="127"/>
    </location>
    <ligand>
        <name>GDP-alpha-D-mannose</name>
        <dbReference type="ChEBI" id="CHEBI:57527"/>
        <note>ligand shared between dimeric partners</note>
    </ligand>
</feature>
<feature type="binding site" description="in other chain" evidence="1">
    <location>
        <begin position="150"/>
        <end position="151"/>
    </location>
    <ligand>
        <name>GDP-alpha-D-mannose</name>
        <dbReference type="ChEBI" id="CHEBI:57527"/>
        <note>ligand shared between dimeric partners</note>
    </ligand>
</feature>
<feature type="binding site" evidence="1">
    <location>
        <position position="151"/>
    </location>
    <ligand>
        <name>Mg(2+)</name>
        <dbReference type="ChEBI" id="CHEBI:18420"/>
        <label>2</label>
    </ligand>
</feature>
<feature type="binding site" description="in other chain" evidence="1">
    <location>
        <position position="176"/>
    </location>
    <ligand>
        <name>GDP-alpha-D-mannose</name>
        <dbReference type="ChEBI" id="CHEBI:57527"/>
        <note>ligand shared between dimeric partners</note>
    </ligand>
</feature>
<dbReference type="EC" id="3.6.1.-" evidence="1"/>
<dbReference type="EMBL" id="AE017220">
    <property type="protein sequence ID" value="AAX66379.1"/>
    <property type="molecule type" value="Genomic_DNA"/>
</dbReference>
<dbReference type="RefSeq" id="WP_000084033.1">
    <property type="nucleotide sequence ID" value="NC_006905.1"/>
</dbReference>
<dbReference type="SMR" id="Q57LN3"/>
<dbReference type="KEGG" id="sec:SCH_2473"/>
<dbReference type="HOGENOM" id="CLU_062658_6_0_6"/>
<dbReference type="Proteomes" id="UP000000538">
    <property type="component" value="Chromosome"/>
</dbReference>
<dbReference type="GO" id="GO:0005829">
    <property type="term" value="C:cytosol"/>
    <property type="evidence" value="ECO:0007669"/>
    <property type="project" value="TreeGrafter"/>
</dbReference>
<dbReference type="GO" id="GO:0016818">
    <property type="term" value="F:hydrolase activity, acting on acid anhydrides, in phosphorus-containing anhydrides"/>
    <property type="evidence" value="ECO:0007669"/>
    <property type="project" value="InterPro"/>
</dbReference>
<dbReference type="GO" id="GO:0046872">
    <property type="term" value="F:metal ion binding"/>
    <property type="evidence" value="ECO:0007669"/>
    <property type="project" value="UniProtKB-KW"/>
</dbReference>
<dbReference type="GO" id="GO:0006753">
    <property type="term" value="P:nucleoside phosphate metabolic process"/>
    <property type="evidence" value="ECO:0007669"/>
    <property type="project" value="TreeGrafter"/>
</dbReference>
<dbReference type="GO" id="GO:0019693">
    <property type="term" value="P:ribose phosphate metabolic process"/>
    <property type="evidence" value="ECO:0007669"/>
    <property type="project" value="TreeGrafter"/>
</dbReference>
<dbReference type="CDD" id="cd24157">
    <property type="entry name" value="NUDIX_GDPMK"/>
    <property type="match status" value="1"/>
</dbReference>
<dbReference type="FunFam" id="3.90.79.10:FF:000010">
    <property type="entry name" value="GDP-mannose pyrophosphatase NudK"/>
    <property type="match status" value="1"/>
</dbReference>
<dbReference type="Gene3D" id="3.90.79.10">
    <property type="entry name" value="Nucleoside Triphosphate Pyrophosphohydrolase"/>
    <property type="match status" value="1"/>
</dbReference>
<dbReference type="InterPro" id="IPR004385">
    <property type="entry name" value="NDP_pyrophosphatase"/>
</dbReference>
<dbReference type="InterPro" id="IPR015797">
    <property type="entry name" value="NUDIX_hydrolase-like_dom_sf"/>
</dbReference>
<dbReference type="InterPro" id="IPR000086">
    <property type="entry name" value="NUDIX_hydrolase_dom"/>
</dbReference>
<dbReference type="NCBIfam" id="TIGR00052">
    <property type="entry name" value="nudix-type nucleoside diphosphatase, YffH/AdpP family"/>
    <property type="match status" value="1"/>
</dbReference>
<dbReference type="NCBIfam" id="NF011585">
    <property type="entry name" value="PRK15009.1"/>
    <property type="match status" value="1"/>
</dbReference>
<dbReference type="PANTHER" id="PTHR11839:SF18">
    <property type="entry name" value="NUDIX HYDROLASE DOMAIN-CONTAINING PROTEIN"/>
    <property type="match status" value="1"/>
</dbReference>
<dbReference type="PANTHER" id="PTHR11839">
    <property type="entry name" value="UDP/ADP-SUGAR PYROPHOSPHATASE"/>
    <property type="match status" value="1"/>
</dbReference>
<dbReference type="Pfam" id="PF00293">
    <property type="entry name" value="NUDIX"/>
    <property type="match status" value="1"/>
</dbReference>
<dbReference type="SUPFAM" id="SSF55811">
    <property type="entry name" value="Nudix"/>
    <property type="match status" value="1"/>
</dbReference>
<dbReference type="PROSITE" id="PS51462">
    <property type="entry name" value="NUDIX"/>
    <property type="match status" value="1"/>
</dbReference>
<keyword id="KW-0378">Hydrolase</keyword>
<keyword id="KW-0460">Magnesium</keyword>
<keyword id="KW-0479">Metal-binding</keyword>
<accession>Q57LN3</accession>